<accession>A5GW82</accession>
<organism>
    <name type="scientific">Synechococcus sp. (strain RCC307)</name>
    <dbReference type="NCBI Taxonomy" id="316278"/>
    <lineage>
        <taxon>Bacteria</taxon>
        <taxon>Bacillati</taxon>
        <taxon>Cyanobacteriota</taxon>
        <taxon>Cyanophyceae</taxon>
        <taxon>Synechococcales</taxon>
        <taxon>Synechococcaceae</taxon>
        <taxon>Synechococcus</taxon>
    </lineage>
</organism>
<feature type="chain" id="PRO_0000345920" description="tRNA modification GTPase MnmE">
    <location>
        <begin position="1"/>
        <end position="453"/>
    </location>
</feature>
<feature type="domain" description="TrmE-type G">
    <location>
        <begin position="224"/>
        <end position="375"/>
    </location>
</feature>
<feature type="binding site" evidence="1">
    <location>
        <position position="28"/>
    </location>
    <ligand>
        <name>(6S)-5-formyl-5,6,7,8-tetrahydrofolate</name>
        <dbReference type="ChEBI" id="CHEBI:57457"/>
    </ligand>
</feature>
<feature type="binding site" evidence="1">
    <location>
        <position position="90"/>
    </location>
    <ligand>
        <name>(6S)-5-formyl-5,6,7,8-tetrahydrofolate</name>
        <dbReference type="ChEBI" id="CHEBI:57457"/>
    </ligand>
</feature>
<feature type="binding site" evidence="1">
    <location>
        <position position="129"/>
    </location>
    <ligand>
        <name>(6S)-5-formyl-5,6,7,8-tetrahydrofolate</name>
        <dbReference type="ChEBI" id="CHEBI:57457"/>
    </ligand>
</feature>
<feature type="binding site" evidence="1">
    <location>
        <begin position="234"/>
        <end position="239"/>
    </location>
    <ligand>
        <name>GTP</name>
        <dbReference type="ChEBI" id="CHEBI:37565"/>
    </ligand>
</feature>
<feature type="binding site" evidence="1">
    <location>
        <position position="234"/>
    </location>
    <ligand>
        <name>K(+)</name>
        <dbReference type="ChEBI" id="CHEBI:29103"/>
    </ligand>
</feature>
<feature type="binding site" evidence="1">
    <location>
        <position position="238"/>
    </location>
    <ligand>
        <name>Mg(2+)</name>
        <dbReference type="ChEBI" id="CHEBI:18420"/>
    </ligand>
</feature>
<feature type="binding site" evidence="1">
    <location>
        <begin position="253"/>
        <end position="259"/>
    </location>
    <ligand>
        <name>GTP</name>
        <dbReference type="ChEBI" id="CHEBI:37565"/>
    </ligand>
</feature>
<feature type="binding site" evidence="1">
    <location>
        <position position="253"/>
    </location>
    <ligand>
        <name>K(+)</name>
        <dbReference type="ChEBI" id="CHEBI:29103"/>
    </ligand>
</feature>
<feature type="binding site" evidence="1">
    <location>
        <position position="255"/>
    </location>
    <ligand>
        <name>K(+)</name>
        <dbReference type="ChEBI" id="CHEBI:29103"/>
    </ligand>
</feature>
<feature type="binding site" evidence="1">
    <location>
        <position position="258"/>
    </location>
    <ligand>
        <name>K(+)</name>
        <dbReference type="ChEBI" id="CHEBI:29103"/>
    </ligand>
</feature>
<feature type="binding site" evidence="1">
    <location>
        <position position="259"/>
    </location>
    <ligand>
        <name>Mg(2+)</name>
        <dbReference type="ChEBI" id="CHEBI:18420"/>
    </ligand>
</feature>
<feature type="binding site" evidence="1">
    <location>
        <begin position="278"/>
        <end position="281"/>
    </location>
    <ligand>
        <name>GTP</name>
        <dbReference type="ChEBI" id="CHEBI:37565"/>
    </ligand>
</feature>
<feature type="binding site" evidence="1">
    <location>
        <begin position="356"/>
        <end position="358"/>
    </location>
    <ligand>
        <name>GTP</name>
        <dbReference type="ChEBI" id="CHEBI:37565"/>
    </ligand>
</feature>
<feature type="binding site" evidence="1">
    <location>
        <position position="453"/>
    </location>
    <ligand>
        <name>(6S)-5-formyl-5,6,7,8-tetrahydrofolate</name>
        <dbReference type="ChEBI" id="CHEBI:57457"/>
    </ligand>
</feature>
<comment type="function">
    <text evidence="1">Exhibits a very high intrinsic GTPase hydrolysis rate. Involved in the addition of a carboxymethylaminomethyl (cmnm) group at the wobble position (U34) of certain tRNAs, forming tRNA-cmnm(5)s(2)U34.</text>
</comment>
<comment type="cofactor">
    <cofactor evidence="1">
        <name>K(+)</name>
        <dbReference type="ChEBI" id="CHEBI:29103"/>
    </cofactor>
    <text evidence="1">Binds 1 potassium ion per subunit.</text>
</comment>
<comment type="subunit">
    <text evidence="1">Homodimer. Heterotetramer of two MnmE and two MnmG subunits.</text>
</comment>
<comment type="subcellular location">
    <subcellularLocation>
        <location evidence="1">Cytoplasm</location>
    </subcellularLocation>
</comment>
<comment type="similarity">
    <text evidence="1">Belongs to the TRAFAC class TrmE-Era-EngA-EngB-Septin-like GTPase superfamily. TrmE GTPase family.</text>
</comment>
<reference key="1">
    <citation type="submission" date="2006-05" db="EMBL/GenBank/DDBJ databases">
        <authorList>
            <consortium name="Genoscope"/>
        </authorList>
    </citation>
    <scope>NUCLEOTIDE SEQUENCE [LARGE SCALE GENOMIC DNA]</scope>
    <source>
        <strain>RCC307</strain>
    </source>
</reference>
<gene>
    <name evidence="1" type="primary">mnmE</name>
    <name evidence="1" type="synonym">trmE</name>
    <name type="ordered locus">SynRCC307_2238</name>
</gene>
<evidence type="ECO:0000255" key="1">
    <source>
        <dbReference type="HAMAP-Rule" id="MF_00379"/>
    </source>
</evidence>
<keyword id="KW-0963">Cytoplasm</keyword>
<keyword id="KW-0342">GTP-binding</keyword>
<keyword id="KW-0378">Hydrolase</keyword>
<keyword id="KW-0460">Magnesium</keyword>
<keyword id="KW-0479">Metal-binding</keyword>
<keyword id="KW-0547">Nucleotide-binding</keyword>
<keyword id="KW-0630">Potassium</keyword>
<keyword id="KW-1185">Reference proteome</keyword>
<keyword id="KW-0819">tRNA processing</keyword>
<dbReference type="EC" id="3.6.-.-" evidence="1"/>
<dbReference type="EMBL" id="CT978603">
    <property type="protein sequence ID" value="CAK29141.1"/>
    <property type="molecule type" value="Genomic_DNA"/>
</dbReference>
<dbReference type="SMR" id="A5GW82"/>
<dbReference type="STRING" id="316278.SynRCC307_2238"/>
<dbReference type="KEGG" id="syr:SynRCC307_2238"/>
<dbReference type="eggNOG" id="COG0486">
    <property type="taxonomic scope" value="Bacteria"/>
</dbReference>
<dbReference type="HOGENOM" id="CLU_019624_4_1_3"/>
<dbReference type="OrthoDB" id="9805918at2"/>
<dbReference type="Proteomes" id="UP000001115">
    <property type="component" value="Chromosome"/>
</dbReference>
<dbReference type="GO" id="GO:0005829">
    <property type="term" value="C:cytosol"/>
    <property type="evidence" value="ECO:0007669"/>
    <property type="project" value="TreeGrafter"/>
</dbReference>
<dbReference type="GO" id="GO:0005525">
    <property type="term" value="F:GTP binding"/>
    <property type="evidence" value="ECO:0007669"/>
    <property type="project" value="UniProtKB-UniRule"/>
</dbReference>
<dbReference type="GO" id="GO:0003924">
    <property type="term" value="F:GTPase activity"/>
    <property type="evidence" value="ECO:0007669"/>
    <property type="project" value="UniProtKB-UniRule"/>
</dbReference>
<dbReference type="GO" id="GO:0046872">
    <property type="term" value="F:metal ion binding"/>
    <property type="evidence" value="ECO:0007669"/>
    <property type="project" value="UniProtKB-KW"/>
</dbReference>
<dbReference type="GO" id="GO:0030488">
    <property type="term" value="P:tRNA methylation"/>
    <property type="evidence" value="ECO:0007669"/>
    <property type="project" value="TreeGrafter"/>
</dbReference>
<dbReference type="GO" id="GO:0002098">
    <property type="term" value="P:tRNA wobble uridine modification"/>
    <property type="evidence" value="ECO:0007669"/>
    <property type="project" value="TreeGrafter"/>
</dbReference>
<dbReference type="CDD" id="cd04164">
    <property type="entry name" value="trmE"/>
    <property type="match status" value="1"/>
</dbReference>
<dbReference type="CDD" id="cd14858">
    <property type="entry name" value="TrmE_N"/>
    <property type="match status" value="1"/>
</dbReference>
<dbReference type="FunFam" id="3.30.1360.120:FF:000003">
    <property type="entry name" value="tRNA modification GTPase MnmE"/>
    <property type="match status" value="1"/>
</dbReference>
<dbReference type="Gene3D" id="3.40.50.300">
    <property type="entry name" value="P-loop containing nucleotide triphosphate hydrolases"/>
    <property type="match status" value="1"/>
</dbReference>
<dbReference type="Gene3D" id="3.30.1360.120">
    <property type="entry name" value="Probable tRNA modification gtpase trme, domain 1"/>
    <property type="match status" value="1"/>
</dbReference>
<dbReference type="Gene3D" id="1.20.120.430">
    <property type="entry name" value="tRNA modification GTPase MnmE domain 2"/>
    <property type="match status" value="1"/>
</dbReference>
<dbReference type="HAMAP" id="MF_00379">
    <property type="entry name" value="GTPase_MnmE"/>
    <property type="match status" value="1"/>
</dbReference>
<dbReference type="InterPro" id="IPR031168">
    <property type="entry name" value="G_TrmE"/>
</dbReference>
<dbReference type="InterPro" id="IPR006073">
    <property type="entry name" value="GTP-bd"/>
</dbReference>
<dbReference type="InterPro" id="IPR018948">
    <property type="entry name" value="GTP-bd_TrmE_N"/>
</dbReference>
<dbReference type="InterPro" id="IPR004520">
    <property type="entry name" value="GTPase_MnmE"/>
</dbReference>
<dbReference type="InterPro" id="IPR027368">
    <property type="entry name" value="MnmE_dom2"/>
</dbReference>
<dbReference type="InterPro" id="IPR025867">
    <property type="entry name" value="MnmE_helical"/>
</dbReference>
<dbReference type="InterPro" id="IPR027417">
    <property type="entry name" value="P-loop_NTPase"/>
</dbReference>
<dbReference type="InterPro" id="IPR005225">
    <property type="entry name" value="Small_GTP-bd"/>
</dbReference>
<dbReference type="InterPro" id="IPR027266">
    <property type="entry name" value="TrmE/GcvT_dom1"/>
</dbReference>
<dbReference type="NCBIfam" id="TIGR00450">
    <property type="entry name" value="mnmE_trmE_thdF"/>
    <property type="match status" value="1"/>
</dbReference>
<dbReference type="NCBIfam" id="TIGR00231">
    <property type="entry name" value="small_GTP"/>
    <property type="match status" value="1"/>
</dbReference>
<dbReference type="PANTHER" id="PTHR42714">
    <property type="entry name" value="TRNA MODIFICATION GTPASE GTPBP3"/>
    <property type="match status" value="1"/>
</dbReference>
<dbReference type="PANTHER" id="PTHR42714:SF2">
    <property type="entry name" value="TRNA MODIFICATION GTPASE GTPBP3, MITOCHONDRIAL"/>
    <property type="match status" value="1"/>
</dbReference>
<dbReference type="Pfam" id="PF01926">
    <property type="entry name" value="MMR_HSR1"/>
    <property type="match status" value="1"/>
</dbReference>
<dbReference type="Pfam" id="PF12631">
    <property type="entry name" value="MnmE_helical"/>
    <property type="match status" value="1"/>
</dbReference>
<dbReference type="Pfam" id="PF10396">
    <property type="entry name" value="TrmE_N"/>
    <property type="match status" value="1"/>
</dbReference>
<dbReference type="PRINTS" id="PR00449">
    <property type="entry name" value="RASTRNSFRMNG"/>
</dbReference>
<dbReference type="SUPFAM" id="SSF52540">
    <property type="entry name" value="P-loop containing nucleoside triphosphate hydrolases"/>
    <property type="match status" value="1"/>
</dbReference>
<dbReference type="PROSITE" id="PS51709">
    <property type="entry name" value="G_TRME"/>
    <property type="match status" value="1"/>
</dbReference>
<sequence length="453" mass="48074">MSLAARDDTIAAIATAVAAGAGSVAIVRISGPQAEAIGRQLFQPAGKQSWESHRVLYGHVNDPANGDVVDEVLLLLMRAPRSFTRETVVEFHGHGGLVAVQRLLELVLAAGARRALPGEFSQRAFLNGRLDLTRAEAISELVSARSRRAAELAMAGLDGGLQQRIEALRDQLLDQLCELEARVDFEEDLPSLDGAAVCTALRDVQQALDQLVLDGQQAQLLRDGLRVAIIGRPNVGKSSLLNALSGHERAIVTDLPGTTRDLLDYDLVLQGVPITLLDTAGIRSTADRVEQLGIERSRAAFASADAVVLLYDLSRGWSPDDSALRNEVPDGTPLLVVGNKSDLAAEPATTQGLAISARSGLGLAELSSALLKLCGLSGEGQGLLLALNQRQCDLAAAASAALGRSQQAARDGLPWDFWTIDLREAIRALGEITGAEITEAVLDRVFSRFCIGK</sequence>
<proteinExistence type="inferred from homology"/>
<name>MNME_SYNR3</name>
<protein>
    <recommendedName>
        <fullName evidence="1">tRNA modification GTPase MnmE</fullName>
        <ecNumber evidence="1">3.6.-.-</ecNumber>
    </recommendedName>
</protein>